<organism>
    <name type="scientific">Syntrophomonas wolfei subsp. wolfei (strain DSM 2245B / Goettingen)</name>
    <dbReference type="NCBI Taxonomy" id="335541"/>
    <lineage>
        <taxon>Bacteria</taxon>
        <taxon>Bacillati</taxon>
        <taxon>Bacillota</taxon>
        <taxon>Clostridia</taxon>
        <taxon>Eubacteriales</taxon>
        <taxon>Syntrophomonadaceae</taxon>
        <taxon>Syntrophomonas</taxon>
    </lineage>
</organism>
<gene>
    <name evidence="1" type="primary">mraZ</name>
    <name type="ordered locus">Swol_0817</name>
</gene>
<sequence length="143" mass="16603">MFLGEYQHSLDEKGRITIPAKFREEIGYKFVATKGLDNCIFLYPQDEWQLIEKKLRSLPFTRADVRSFVRFFFSGAAELDLDRQGRSVLPLNLREYAGIDRDVIIIGVGTRVEIWSTEKWTDYNENAQSSYEEIAENLVDLGI</sequence>
<protein>
    <recommendedName>
        <fullName>Transcriptional regulator MraZ</fullName>
    </recommendedName>
</protein>
<evidence type="ECO:0000255" key="1">
    <source>
        <dbReference type="HAMAP-Rule" id="MF_01008"/>
    </source>
</evidence>
<evidence type="ECO:0000255" key="2">
    <source>
        <dbReference type="PROSITE-ProRule" id="PRU01076"/>
    </source>
</evidence>
<proteinExistence type="inferred from homology"/>
<feature type="chain" id="PRO_1000062946" description="Transcriptional regulator MraZ">
    <location>
        <begin position="1"/>
        <end position="143"/>
    </location>
</feature>
<feature type="domain" description="SpoVT-AbrB 1" evidence="2">
    <location>
        <begin position="5"/>
        <end position="47"/>
    </location>
</feature>
<feature type="domain" description="SpoVT-AbrB 2" evidence="2">
    <location>
        <begin position="76"/>
        <end position="119"/>
    </location>
</feature>
<keyword id="KW-0963">Cytoplasm</keyword>
<keyword id="KW-0238">DNA-binding</keyword>
<keyword id="KW-1185">Reference proteome</keyword>
<keyword id="KW-0677">Repeat</keyword>
<keyword id="KW-0804">Transcription</keyword>
<keyword id="KW-0805">Transcription regulation</keyword>
<dbReference type="EMBL" id="CP000448">
    <property type="protein sequence ID" value="ABI68138.1"/>
    <property type="molecule type" value="Genomic_DNA"/>
</dbReference>
<dbReference type="RefSeq" id="WP_011640243.1">
    <property type="nucleotide sequence ID" value="NC_008346.1"/>
</dbReference>
<dbReference type="SMR" id="Q0AYR6"/>
<dbReference type="STRING" id="335541.Swol_0817"/>
<dbReference type="KEGG" id="swo:Swol_0817"/>
<dbReference type="eggNOG" id="COG2001">
    <property type="taxonomic scope" value="Bacteria"/>
</dbReference>
<dbReference type="HOGENOM" id="CLU_107907_0_5_9"/>
<dbReference type="OrthoDB" id="9807753at2"/>
<dbReference type="Proteomes" id="UP000001968">
    <property type="component" value="Chromosome"/>
</dbReference>
<dbReference type="GO" id="GO:0005737">
    <property type="term" value="C:cytoplasm"/>
    <property type="evidence" value="ECO:0007669"/>
    <property type="project" value="UniProtKB-UniRule"/>
</dbReference>
<dbReference type="GO" id="GO:0009295">
    <property type="term" value="C:nucleoid"/>
    <property type="evidence" value="ECO:0007669"/>
    <property type="project" value="UniProtKB-SubCell"/>
</dbReference>
<dbReference type="GO" id="GO:0003700">
    <property type="term" value="F:DNA-binding transcription factor activity"/>
    <property type="evidence" value="ECO:0007669"/>
    <property type="project" value="UniProtKB-UniRule"/>
</dbReference>
<dbReference type="GO" id="GO:0000976">
    <property type="term" value="F:transcription cis-regulatory region binding"/>
    <property type="evidence" value="ECO:0007669"/>
    <property type="project" value="TreeGrafter"/>
</dbReference>
<dbReference type="GO" id="GO:2000143">
    <property type="term" value="P:negative regulation of DNA-templated transcription initiation"/>
    <property type="evidence" value="ECO:0007669"/>
    <property type="project" value="TreeGrafter"/>
</dbReference>
<dbReference type="CDD" id="cd16321">
    <property type="entry name" value="MraZ_C"/>
    <property type="match status" value="1"/>
</dbReference>
<dbReference type="CDD" id="cd16320">
    <property type="entry name" value="MraZ_N"/>
    <property type="match status" value="1"/>
</dbReference>
<dbReference type="FunFam" id="3.40.1550.20:FF:000002">
    <property type="entry name" value="Transcriptional regulator MraZ"/>
    <property type="match status" value="1"/>
</dbReference>
<dbReference type="Gene3D" id="3.40.1550.20">
    <property type="entry name" value="Transcriptional regulator MraZ domain"/>
    <property type="match status" value="1"/>
</dbReference>
<dbReference type="HAMAP" id="MF_01008">
    <property type="entry name" value="MraZ"/>
    <property type="match status" value="1"/>
</dbReference>
<dbReference type="InterPro" id="IPR003444">
    <property type="entry name" value="MraZ"/>
</dbReference>
<dbReference type="InterPro" id="IPR035644">
    <property type="entry name" value="MraZ_C"/>
</dbReference>
<dbReference type="InterPro" id="IPR020603">
    <property type="entry name" value="MraZ_dom"/>
</dbReference>
<dbReference type="InterPro" id="IPR035642">
    <property type="entry name" value="MraZ_N"/>
</dbReference>
<dbReference type="InterPro" id="IPR038619">
    <property type="entry name" value="MraZ_sf"/>
</dbReference>
<dbReference type="InterPro" id="IPR007159">
    <property type="entry name" value="SpoVT-AbrB_dom"/>
</dbReference>
<dbReference type="InterPro" id="IPR037914">
    <property type="entry name" value="SpoVT-AbrB_sf"/>
</dbReference>
<dbReference type="NCBIfam" id="TIGR00242">
    <property type="entry name" value="division/cell wall cluster transcriptional repressor MraZ"/>
    <property type="match status" value="1"/>
</dbReference>
<dbReference type="PANTHER" id="PTHR34701">
    <property type="entry name" value="TRANSCRIPTIONAL REGULATOR MRAZ"/>
    <property type="match status" value="1"/>
</dbReference>
<dbReference type="PANTHER" id="PTHR34701:SF1">
    <property type="entry name" value="TRANSCRIPTIONAL REGULATOR MRAZ"/>
    <property type="match status" value="1"/>
</dbReference>
<dbReference type="Pfam" id="PF02381">
    <property type="entry name" value="MraZ"/>
    <property type="match status" value="2"/>
</dbReference>
<dbReference type="SUPFAM" id="SSF89447">
    <property type="entry name" value="AbrB/MazE/MraZ-like"/>
    <property type="match status" value="1"/>
</dbReference>
<dbReference type="PROSITE" id="PS51740">
    <property type="entry name" value="SPOVT_ABRB"/>
    <property type="match status" value="2"/>
</dbReference>
<reference key="1">
    <citation type="journal article" date="2010" name="Environ. Microbiol.">
        <title>The genome of Syntrophomonas wolfei: new insights into syntrophic metabolism and biohydrogen production.</title>
        <authorList>
            <person name="Sieber J.R."/>
            <person name="Sims D.R."/>
            <person name="Han C."/>
            <person name="Kim E."/>
            <person name="Lykidis A."/>
            <person name="Lapidus A.L."/>
            <person name="McDonnald E."/>
            <person name="Rohlin L."/>
            <person name="Culley D.E."/>
            <person name="Gunsalus R."/>
            <person name="McInerney M.J."/>
        </authorList>
    </citation>
    <scope>NUCLEOTIDE SEQUENCE [LARGE SCALE GENOMIC DNA]</scope>
    <source>
        <strain>DSM 2245B / Goettingen</strain>
    </source>
</reference>
<name>MRAZ_SYNWW</name>
<accession>Q0AYR6</accession>
<comment type="subunit">
    <text evidence="1">Forms oligomers.</text>
</comment>
<comment type="subcellular location">
    <subcellularLocation>
        <location evidence="1">Cytoplasm</location>
        <location evidence="1">Nucleoid</location>
    </subcellularLocation>
</comment>
<comment type="similarity">
    <text evidence="1">Belongs to the MraZ family.</text>
</comment>